<comment type="function">
    <text evidence="1">Escorts unspliced or incompletely spliced viral pre-mRNAs (late transcripts) out of the nucleus of infected cells. These pre-mRNAs carry a recognition sequence called Rev responsive element (RRE) located in the env gene, that is not present in fully spliced viral mRNAs (early transcripts). This function is essential since most viral proteins are translated from unspliced or partially spliced pre-mRNAs which cannot exit the nucleus by the pathway used by fully processed cellular mRNAs (By similarity).</text>
</comment>
<comment type="subunit">
    <text evidence="1">Homomultimer; when bound to the RRE. Multimeric assembly is essential for activity (By similarity).</text>
</comment>
<comment type="subcellular location">
    <subcellularLocation>
        <location>Host nucleus</location>
        <location>Host nucleolus</location>
    </subcellularLocation>
    <subcellularLocation>
        <location>Host cytoplasm</location>
    </subcellularLocation>
    <text evidence="1">The presence of both nuclear import and nuclear export signals leads to continuous shuttling between the nucleus and cytoplasm.</text>
</comment>
<comment type="domain">
    <text evidence="1">The RNA-binding motif binds to the RRE, a stem-and-loop structure present in incompletely spliced viral pre-mRNAs. This region also contains the NLS which mediates nuclear localization. These overlapping functions prevent Rev bound to RRE from undesirable return to the nucleus. When Rev binds the RRE, the NLS becomes masked while the NES remains accessible (By similarity).</text>
</comment>
<name>REV_HV2UC</name>
<keyword id="KW-0014">AIDS</keyword>
<keyword id="KW-1035">Host cytoplasm</keyword>
<keyword id="KW-1048">Host nucleus</keyword>
<keyword id="KW-0509">mRNA transport</keyword>
<keyword id="KW-0694">RNA-binding</keyword>
<keyword id="KW-0813">Transport</keyword>
<organism>
    <name type="scientific">Human immunodeficiency virus type 2 subtype B (isolate UC1)</name>
    <name type="common">HIV-2</name>
    <dbReference type="NCBI Taxonomy" id="388822"/>
    <lineage>
        <taxon>Viruses</taxon>
        <taxon>Riboviria</taxon>
        <taxon>Pararnavirae</taxon>
        <taxon>Artverviricota</taxon>
        <taxon>Revtraviricetes</taxon>
        <taxon>Ortervirales</taxon>
        <taxon>Retroviridae</taxon>
        <taxon>Orthoretrovirinae</taxon>
        <taxon>Lentivirus</taxon>
        <taxon>Human immunodeficiency virus 2</taxon>
    </lineage>
</organism>
<protein>
    <recommendedName>
        <fullName>Protein Rev</fullName>
    </recommendedName>
    <alternativeName>
        <fullName>Regulator of expression of viral proteins</fullName>
    </alternativeName>
</protein>
<organismHost>
    <name type="scientific">Homo sapiens</name>
    <name type="common">Human</name>
    <dbReference type="NCBI Taxonomy" id="9606"/>
</organismHost>
<dbReference type="EMBL" id="L07625">
    <property type="protein sequence ID" value="AAA43939.1"/>
    <property type="molecule type" value="Genomic_RNA"/>
</dbReference>
<dbReference type="SMR" id="Q76631"/>
<dbReference type="Proteomes" id="UP000007428">
    <property type="component" value="Segment"/>
</dbReference>
<dbReference type="GO" id="GO:0030430">
    <property type="term" value="C:host cell cytoplasm"/>
    <property type="evidence" value="ECO:0007669"/>
    <property type="project" value="UniProtKB-SubCell"/>
</dbReference>
<dbReference type="GO" id="GO:0044196">
    <property type="term" value="C:host cell nucleolus"/>
    <property type="evidence" value="ECO:0007669"/>
    <property type="project" value="UniProtKB-SubCell"/>
</dbReference>
<dbReference type="GO" id="GO:0003700">
    <property type="term" value="F:DNA-binding transcription factor activity"/>
    <property type="evidence" value="ECO:0007669"/>
    <property type="project" value="InterPro"/>
</dbReference>
<dbReference type="GO" id="GO:0003723">
    <property type="term" value="F:RNA binding"/>
    <property type="evidence" value="ECO:0007669"/>
    <property type="project" value="UniProtKB-KW"/>
</dbReference>
<dbReference type="GO" id="GO:0051028">
    <property type="term" value="P:mRNA transport"/>
    <property type="evidence" value="ECO:0007669"/>
    <property type="project" value="UniProtKB-KW"/>
</dbReference>
<dbReference type="Gene3D" id="6.10.140.630">
    <property type="match status" value="1"/>
</dbReference>
<dbReference type="InterPro" id="IPR000625">
    <property type="entry name" value="REV_protein"/>
</dbReference>
<dbReference type="Pfam" id="PF00424">
    <property type="entry name" value="REV"/>
    <property type="match status" value="1"/>
</dbReference>
<gene>
    <name type="primary">rev</name>
</gene>
<accession>Q76631</accession>
<sequence>MTTREKDLQKGLRLLHLLHQTNPYPQTPGTASQRRNRRRRWKRRGLQILALADRIRSLSDSPTEEPLDLAVQRLQELTVEDLPNPPTSTPTAQAFTCIPPVWDQLVPRSNPSSNEGCERDSCEHRKSPMESSQKDSGSNHRDPQEDQTRT</sequence>
<evidence type="ECO:0000250" key="1"/>
<evidence type="ECO:0000256" key="2">
    <source>
        <dbReference type="SAM" id="MobiDB-lite"/>
    </source>
</evidence>
<reference key="1">
    <citation type="journal article" date="1993" name="J. Virol.">
        <title>Distinguishing features of an infectious molecular clone of the highly divergent and noncytopathic human immunodeficiency virus type 2 UC1 strain.</title>
        <authorList>
            <person name="Barnett S.W."/>
            <person name="Quiroga M."/>
            <person name="Werner A."/>
            <person name="Dina D."/>
            <person name="Levy J.A."/>
        </authorList>
    </citation>
    <scope>NUCLEOTIDE SEQUENCE [GENOMIC RNA]</scope>
    <source>
        <strain>2UC1</strain>
    </source>
</reference>
<feature type="chain" id="PRO_0000245011" description="Protein Rev">
    <location>
        <begin position="1"/>
        <end position="150"/>
    </location>
</feature>
<feature type="region of interest" description="Homomultimerization" evidence="1">
    <location>
        <begin position="14"/>
        <end position="22"/>
    </location>
</feature>
<feature type="region of interest" description="Disordered" evidence="2">
    <location>
        <begin position="20"/>
        <end position="41"/>
    </location>
</feature>
<feature type="region of interest" description="Disordered" evidence="2">
    <location>
        <begin position="103"/>
        <end position="150"/>
    </location>
</feature>
<feature type="short sequence motif" description="Nuclear localization signal and RNA-binding (RRE)" evidence="1">
    <location>
        <begin position="33"/>
        <end position="47"/>
    </location>
</feature>
<feature type="short sequence motif" description="Nuclear export signal and binding to XPO1" evidence="1">
    <location>
        <begin position="69"/>
        <end position="80"/>
    </location>
</feature>
<feature type="compositionally biased region" description="Polar residues" evidence="2">
    <location>
        <begin position="20"/>
        <end position="33"/>
    </location>
</feature>
<feature type="compositionally biased region" description="Basic and acidic residues" evidence="2">
    <location>
        <begin position="116"/>
        <end position="128"/>
    </location>
</feature>
<feature type="compositionally biased region" description="Basic and acidic residues" evidence="2">
    <location>
        <begin position="137"/>
        <end position="150"/>
    </location>
</feature>
<proteinExistence type="inferred from homology"/>